<sequence length="363" mass="40564">MTVTGIIAEFNPFHNGHKYLLDHAEGIKIVAMSGNFVQRGEPAIVDKWIRAQMALENGADLVVELPFFTAVQSADYFASGAVDVLSRLGIDSLTFGTEEVLDYQTIADVYSEKSEEMEAFVESLPSDLSYPQKTQKMWEKFAGVDFTGNTPNHILGLAYAKACAGKGITLNPIQRQGAGYHSLDKEVSFASATSLRLHKEDSDFVDKFMPNSKLFQTSPQVSWDNYFQLLVYQILTNPDLTSVFQVNEEIASRLKAAVREISSVEELVDKVATKRYTKARVRRILTYILVGAVDNSLPKSIHVLGFSQKGQFHLKSVKKSVDIVARIGRKPWDMLTQQADNVYQLGNPELCEQNFGRVPIRVK</sequence>
<organism>
    <name type="scientific">Streptococcus thermophilus (strain ATCC BAA-491 / LMD-9)</name>
    <dbReference type="NCBI Taxonomy" id="322159"/>
    <lineage>
        <taxon>Bacteria</taxon>
        <taxon>Bacillati</taxon>
        <taxon>Bacillota</taxon>
        <taxon>Bacilli</taxon>
        <taxon>Lactobacillales</taxon>
        <taxon>Streptococcaceae</taxon>
        <taxon>Streptococcus</taxon>
    </lineage>
</organism>
<name>TMCAL_STRTD</name>
<proteinExistence type="inferred from homology"/>
<feature type="chain" id="PRO_0000300202" description="tRNA(Met) cytidine acetate ligase">
    <location>
        <begin position="1"/>
        <end position="363"/>
    </location>
</feature>
<feature type="binding site" evidence="1">
    <location>
        <begin position="7"/>
        <end position="20"/>
    </location>
    <ligand>
        <name>ATP</name>
        <dbReference type="ChEBI" id="CHEBI:30616"/>
    </ligand>
</feature>
<feature type="binding site" evidence="1">
    <location>
        <position position="96"/>
    </location>
    <ligand>
        <name>ATP</name>
        <dbReference type="ChEBI" id="CHEBI:30616"/>
    </ligand>
</feature>
<feature type="binding site" evidence="1">
    <location>
        <position position="152"/>
    </location>
    <ligand>
        <name>ATP</name>
        <dbReference type="ChEBI" id="CHEBI:30616"/>
    </ligand>
</feature>
<feature type="binding site" evidence="1">
    <location>
        <position position="175"/>
    </location>
    <ligand>
        <name>ATP</name>
        <dbReference type="ChEBI" id="CHEBI:30616"/>
    </ligand>
</feature>
<comment type="function">
    <text evidence="1">Catalyzes the formation of N(4)-acetylcytidine (ac(4)C) at the wobble position of elongator tRNA(Met), using acetate and ATP as substrates. First activates an acetate ion to form acetyladenylate (Ac-AMP) and then transfers the acetyl group to tRNA to form ac(4)C34.</text>
</comment>
<comment type="catalytic activity">
    <reaction evidence="1">
        <text>cytidine(34) in elongator tRNA(Met) + acetate + ATP = N(4)-acetylcytidine(34) in elongator tRNA(Met) + AMP + diphosphate</text>
        <dbReference type="Rhea" id="RHEA:58144"/>
        <dbReference type="Rhea" id="RHEA-COMP:10693"/>
        <dbReference type="Rhea" id="RHEA-COMP:10694"/>
        <dbReference type="ChEBI" id="CHEBI:30089"/>
        <dbReference type="ChEBI" id="CHEBI:30616"/>
        <dbReference type="ChEBI" id="CHEBI:33019"/>
        <dbReference type="ChEBI" id="CHEBI:74900"/>
        <dbReference type="ChEBI" id="CHEBI:82748"/>
        <dbReference type="ChEBI" id="CHEBI:456215"/>
    </reaction>
</comment>
<comment type="subcellular location">
    <subcellularLocation>
        <location evidence="1">Cytoplasm</location>
    </subcellularLocation>
</comment>
<comment type="similarity">
    <text evidence="1">Belongs to the TmcAL family.</text>
</comment>
<protein>
    <recommendedName>
        <fullName evidence="1">tRNA(Met) cytidine acetate ligase</fullName>
        <ecNumber evidence="1">6.3.4.-</ecNumber>
    </recommendedName>
</protein>
<accession>Q03J93</accession>
<evidence type="ECO:0000255" key="1">
    <source>
        <dbReference type="HAMAP-Rule" id="MF_01539"/>
    </source>
</evidence>
<reference key="1">
    <citation type="journal article" date="2006" name="Proc. Natl. Acad. Sci. U.S.A.">
        <title>Comparative genomics of the lactic acid bacteria.</title>
        <authorList>
            <person name="Makarova K.S."/>
            <person name="Slesarev A."/>
            <person name="Wolf Y.I."/>
            <person name="Sorokin A."/>
            <person name="Mirkin B."/>
            <person name="Koonin E.V."/>
            <person name="Pavlov A."/>
            <person name="Pavlova N."/>
            <person name="Karamychev V."/>
            <person name="Polouchine N."/>
            <person name="Shakhova V."/>
            <person name="Grigoriev I."/>
            <person name="Lou Y."/>
            <person name="Rohksar D."/>
            <person name="Lucas S."/>
            <person name="Huang K."/>
            <person name="Goodstein D.M."/>
            <person name="Hawkins T."/>
            <person name="Plengvidhya V."/>
            <person name="Welker D."/>
            <person name="Hughes J."/>
            <person name="Goh Y."/>
            <person name="Benson A."/>
            <person name="Baldwin K."/>
            <person name="Lee J.-H."/>
            <person name="Diaz-Muniz I."/>
            <person name="Dosti B."/>
            <person name="Smeianov V."/>
            <person name="Wechter W."/>
            <person name="Barabote R."/>
            <person name="Lorca G."/>
            <person name="Altermann E."/>
            <person name="Barrangou R."/>
            <person name="Ganesan B."/>
            <person name="Xie Y."/>
            <person name="Rawsthorne H."/>
            <person name="Tamir D."/>
            <person name="Parker C."/>
            <person name="Breidt F."/>
            <person name="Broadbent J.R."/>
            <person name="Hutkins R."/>
            <person name="O'Sullivan D."/>
            <person name="Steele J."/>
            <person name="Unlu G."/>
            <person name="Saier M.H. Jr."/>
            <person name="Klaenhammer T."/>
            <person name="Richardson P."/>
            <person name="Kozyavkin S."/>
            <person name="Weimer B.C."/>
            <person name="Mills D.A."/>
        </authorList>
    </citation>
    <scope>NUCLEOTIDE SEQUENCE [LARGE SCALE GENOMIC DNA]</scope>
    <source>
        <strain>ATCC BAA-491 / LMD-9</strain>
    </source>
</reference>
<dbReference type="EC" id="6.3.4.-" evidence="1"/>
<dbReference type="EMBL" id="CP000419">
    <property type="protein sequence ID" value="ABJ66729.1"/>
    <property type="molecule type" value="Genomic_DNA"/>
</dbReference>
<dbReference type="RefSeq" id="WP_011681536.1">
    <property type="nucleotide sequence ID" value="NC_008532.1"/>
</dbReference>
<dbReference type="SMR" id="Q03J93"/>
<dbReference type="KEGG" id="ste:STER_1579"/>
<dbReference type="HOGENOM" id="CLU_038915_0_2_9"/>
<dbReference type="GO" id="GO:0005737">
    <property type="term" value="C:cytoplasm"/>
    <property type="evidence" value="ECO:0007669"/>
    <property type="project" value="UniProtKB-SubCell"/>
</dbReference>
<dbReference type="GO" id="GO:0005524">
    <property type="term" value="F:ATP binding"/>
    <property type="evidence" value="ECO:0007669"/>
    <property type="project" value="UniProtKB-KW"/>
</dbReference>
<dbReference type="GO" id="GO:0016879">
    <property type="term" value="F:ligase activity, forming carbon-nitrogen bonds"/>
    <property type="evidence" value="ECO:0007669"/>
    <property type="project" value="UniProtKB-UniRule"/>
</dbReference>
<dbReference type="GO" id="GO:0000049">
    <property type="term" value="F:tRNA binding"/>
    <property type="evidence" value="ECO:0007669"/>
    <property type="project" value="UniProtKB-KW"/>
</dbReference>
<dbReference type="GO" id="GO:0006400">
    <property type="term" value="P:tRNA modification"/>
    <property type="evidence" value="ECO:0007669"/>
    <property type="project" value="UniProtKB-UniRule"/>
</dbReference>
<dbReference type="Gene3D" id="3.40.50.620">
    <property type="entry name" value="HUPs"/>
    <property type="match status" value="1"/>
</dbReference>
<dbReference type="HAMAP" id="MF_01539">
    <property type="entry name" value="TmcAL"/>
    <property type="match status" value="1"/>
</dbReference>
<dbReference type="InterPro" id="IPR014729">
    <property type="entry name" value="Rossmann-like_a/b/a_fold"/>
</dbReference>
<dbReference type="InterPro" id="IPR008513">
    <property type="entry name" value="tRNA(Met)_cyd_acetate_ligase"/>
</dbReference>
<dbReference type="NCBIfam" id="NF010191">
    <property type="entry name" value="PRK13670.1"/>
    <property type="match status" value="1"/>
</dbReference>
<dbReference type="PANTHER" id="PTHR37825">
    <property type="entry name" value="TRNA(MET) CYTIDINE ACETATE LIGASE"/>
    <property type="match status" value="1"/>
</dbReference>
<dbReference type="PANTHER" id="PTHR37825:SF1">
    <property type="entry name" value="TRNA(MET) CYTIDINE ACETATE LIGASE"/>
    <property type="match status" value="1"/>
</dbReference>
<dbReference type="Pfam" id="PF05636">
    <property type="entry name" value="HIGH_NTase1"/>
    <property type="match status" value="1"/>
</dbReference>
<dbReference type="SUPFAM" id="SSF52374">
    <property type="entry name" value="Nucleotidylyl transferase"/>
    <property type="match status" value="1"/>
</dbReference>
<keyword id="KW-0067">ATP-binding</keyword>
<keyword id="KW-0963">Cytoplasm</keyword>
<keyword id="KW-0436">Ligase</keyword>
<keyword id="KW-0547">Nucleotide-binding</keyword>
<keyword id="KW-0694">RNA-binding</keyword>
<keyword id="KW-0819">tRNA processing</keyword>
<keyword id="KW-0820">tRNA-binding</keyword>
<gene>
    <name evidence="1" type="primary">tmcAL</name>
    <name type="ordered locus">STER_1579</name>
</gene>